<sequence>MFSKIIQSYAKGNLIIQICAGIALGILIGINSKEISEIANLLGILFTSALKAIAPMLVFILILTSICTKDFSQSGVKIKNIIILYIVGTFLASACAILANFFFPVKLVLDGIQATTNPSPAHMGEIFKDLLFKIVDNPINALSSGNYLGILTWAIAGGAALKHCSNEAKQVFIDINEGVLKIVKFVVKLAPFGIFGLVANSVAQTGAQGLLSYTKLLILLVATMLFVTFVINALIVFFYTRKNPFPLIFICLRHSAFFAFFTRSSAANIPVNMALCAKLGIDKEFYGISIPLGATINMAGAAVTIAILSLTAANTVGIEISLLQAFLLSIIATFAASGASGVAGGSLLLIPLACSLFNIDYDIAMKVVAIGFIIGVIQDSVETALNSSTDVLFTAICSKNELNYNIK</sequence>
<accession>A7H2R0</accession>
<protein>
    <recommendedName>
        <fullName evidence="1">Serine/threonine transporter SstT</fullName>
    </recommendedName>
    <alternativeName>
        <fullName evidence="1">Na(+)/serine-threonine symporter</fullName>
    </alternativeName>
</protein>
<organism>
    <name type="scientific">Campylobacter jejuni subsp. doylei (strain ATCC BAA-1458 / RM4099 / 269.97)</name>
    <dbReference type="NCBI Taxonomy" id="360109"/>
    <lineage>
        <taxon>Bacteria</taxon>
        <taxon>Pseudomonadati</taxon>
        <taxon>Campylobacterota</taxon>
        <taxon>Epsilonproteobacteria</taxon>
        <taxon>Campylobacterales</taxon>
        <taxon>Campylobacteraceae</taxon>
        <taxon>Campylobacter</taxon>
    </lineage>
</organism>
<gene>
    <name evidence="1" type="primary">sstT</name>
    <name type="ordered locus">JJD26997_0625</name>
</gene>
<dbReference type="EMBL" id="CP000768">
    <property type="protein sequence ID" value="ABS43254.1"/>
    <property type="molecule type" value="Genomic_DNA"/>
</dbReference>
<dbReference type="SMR" id="A7H2R0"/>
<dbReference type="KEGG" id="cjd:JJD26997_0625"/>
<dbReference type="HOGENOM" id="CLU_044581_0_0_7"/>
<dbReference type="Proteomes" id="UP000002302">
    <property type="component" value="Chromosome"/>
</dbReference>
<dbReference type="GO" id="GO:0005886">
    <property type="term" value="C:plasma membrane"/>
    <property type="evidence" value="ECO:0007669"/>
    <property type="project" value="UniProtKB-SubCell"/>
</dbReference>
<dbReference type="GO" id="GO:0005295">
    <property type="term" value="F:neutral L-amino acid:sodium symporter activity"/>
    <property type="evidence" value="ECO:0007669"/>
    <property type="project" value="TreeGrafter"/>
</dbReference>
<dbReference type="GO" id="GO:0032329">
    <property type="term" value="P:serine transport"/>
    <property type="evidence" value="ECO:0007669"/>
    <property type="project" value="InterPro"/>
</dbReference>
<dbReference type="GO" id="GO:0015826">
    <property type="term" value="P:threonine transport"/>
    <property type="evidence" value="ECO:0007669"/>
    <property type="project" value="InterPro"/>
</dbReference>
<dbReference type="Gene3D" id="1.10.3860.10">
    <property type="entry name" value="Sodium:dicarboxylate symporter"/>
    <property type="match status" value="1"/>
</dbReference>
<dbReference type="HAMAP" id="MF_01582">
    <property type="entry name" value="Ser_Thr_transp_SstT"/>
    <property type="match status" value="1"/>
</dbReference>
<dbReference type="InterPro" id="IPR001991">
    <property type="entry name" value="Na-dicarboxylate_symporter"/>
</dbReference>
<dbReference type="InterPro" id="IPR036458">
    <property type="entry name" value="Na:dicarbo_symporter_sf"/>
</dbReference>
<dbReference type="InterPro" id="IPR023025">
    <property type="entry name" value="Ser_Thr_transp_SstT"/>
</dbReference>
<dbReference type="NCBIfam" id="NF010151">
    <property type="entry name" value="PRK13628.1"/>
    <property type="match status" value="1"/>
</dbReference>
<dbReference type="PANTHER" id="PTHR42865">
    <property type="entry name" value="PROTON/GLUTAMATE-ASPARTATE SYMPORTER"/>
    <property type="match status" value="1"/>
</dbReference>
<dbReference type="PANTHER" id="PTHR42865:SF8">
    <property type="entry name" value="SERINE_THREONINE TRANSPORTER SSTT"/>
    <property type="match status" value="1"/>
</dbReference>
<dbReference type="Pfam" id="PF00375">
    <property type="entry name" value="SDF"/>
    <property type="match status" value="1"/>
</dbReference>
<dbReference type="PRINTS" id="PR00173">
    <property type="entry name" value="EDTRNSPORT"/>
</dbReference>
<dbReference type="SUPFAM" id="SSF118215">
    <property type="entry name" value="Proton glutamate symport protein"/>
    <property type="match status" value="1"/>
</dbReference>
<comment type="function">
    <text evidence="1">Involved in the import of serine and threonine into the cell, with the concomitant import of sodium (symport system).</text>
</comment>
<comment type="catalytic activity">
    <reaction evidence="1">
        <text>L-serine(in) + Na(+)(in) = L-serine(out) + Na(+)(out)</text>
        <dbReference type="Rhea" id="RHEA:29575"/>
        <dbReference type="ChEBI" id="CHEBI:29101"/>
        <dbReference type="ChEBI" id="CHEBI:33384"/>
    </reaction>
    <physiologicalReaction direction="right-to-left" evidence="1">
        <dbReference type="Rhea" id="RHEA:29577"/>
    </physiologicalReaction>
</comment>
<comment type="catalytic activity">
    <reaction evidence="1">
        <text>L-threonine(in) + Na(+)(in) = L-threonine(out) + Na(+)(out)</text>
        <dbReference type="Rhea" id="RHEA:69999"/>
        <dbReference type="ChEBI" id="CHEBI:29101"/>
        <dbReference type="ChEBI" id="CHEBI:57926"/>
    </reaction>
    <physiologicalReaction direction="right-to-left" evidence="1">
        <dbReference type="Rhea" id="RHEA:70001"/>
    </physiologicalReaction>
</comment>
<comment type="subcellular location">
    <subcellularLocation>
        <location evidence="1">Cell inner membrane</location>
        <topology evidence="1">Multi-pass membrane protein</topology>
    </subcellularLocation>
</comment>
<comment type="similarity">
    <text evidence="1">Belongs to the dicarboxylate/amino acid:cation symporter (DAACS) (TC 2.A.23) family.</text>
</comment>
<proteinExistence type="inferred from homology"/>
<name>SSTT_CAMJD</name>
<reference key="1">
    <citation type="submission" date="2007-07" db="EMBL/GenBank/DDBJ databases">
        <title>Complete genome sequence of Campylobacter jejuni subsp doylei 269.97 isolated from human blood.</title>
        <authorList>
            <person name="Fouts D.E."/>
            <person name="Mongodin E.F."/>
            <person name="Puiu D."/>
            <person name="Sebastian Y."/>
            <person name="Miller W.G."/>
            <person name="Mandrell R.E."/>
            <person name="Lastovica A.J."/>
            <person name="Nelson K.E."/>
        </authorList>
    </citation>
    <scope>NUCLEOTIDE SEQUENCE [LARGE SCALE GENOMIC DNA]</scope>
    <source>
        <strain>ATCC BAA-1458 / RM4099 / 269.97</strain>
    </source>
</reference>
<evidence type="ECO:0000255" key="1">
    <source>
        <dbReference type="HAMAP-Rule" id="MF_01582"/>
    </source>
</evidence>
<feature type="chain" id="PRO_1000069281" description="Serine/threonine transporter SstT">
    <location>
        <begin position="1"/>
        <end position="407"/>
    </location>
</feature>
<feature type="transmembrane region" description="Helical" evidence="1">
    <location>
        <begin position="10"/>
        <end position="30"/>
    </location>
</feature>
<feature type="transmembrane region" description="Helical" evidence="1">
    <location>
        <begin position="42"/>
        <end position="62"/>
    </location>
</feature>
<feature type="transmembrane region" description="Helical" evidence="1">
    <location>
        <begin position="81"/>
        <end position="101"/>
    </location>
</feature>
<feature type="transmembrane region" description="Helical" evidence="1">
    <location>
        <begin position="141"/>
        <end position="161"/>
    </location>
</feature>
<feature type="transmembrane region" description="Helical" evidence="1">
    <location>
        <begin position="179"/>
        <end position="199"/>
    </location>
</feature>
<feature type="transmembrane region" description="Helical" evidence="1">
    <location>
        <begin position="218"/>
        <end position="238"/>
    </location>
</feature>
<feature type="transmembrane region" description="Helical" evidence="1">
    <location>
        <begin position="245"/>
        <end position="267"/>
    </location>
</feature>
<feature type="transmembrane region" description="Helical" evidence="1">
    <location>
        <begin position="288"/>
        <end position="308"/>
    </location>
</feature>
<feature type="transmembrane region" description="Helical" evidence="1">
    <location>
        <begin position="316"/>
        <end position="336"/>
    </location>
</feature>
<keyword id="KW-0029">Amino-acid transport</keyword>
<keyword id="KW-0997">Cell inner membrane</keyword>
<keyword id="KW-1003">Cell membrane</keyword>
<keyword id="KW-0472">Membrane</keyword>
<keyword id="KW-0769">Symport</keyword>
<keyword id="KW-0812">Transmembrane</keyword>
<keyword id="KW-1133">Transmembrane helix</keyword>
<keyword id="KW-0813">Transport</keyword>